<evidence type="ECO:0000255" key="1">
    <source>
        <dbReference type="HAMAP-Rule" id="MF_00074"/>
    </source>
</evidence>
<feature type="chain" id="PRO_0000342927" description="Ribosomal RNA small subunit methyltransferase G">
    <location>
        <begin position="1"/>
        <end position="170"/>
    </location>
</feature>
<feature type="binding site" evidence="1">
    <location>
        <position position="70"/>
    </location>
    <ligand>
        <name>S-adenosyl-L-methionine</name>
        <dbReference type="ChEBI" id="CHEBI:59789"/>
    </ligand>
</feature>
<feature type="binding site" evidence="1">
    <location>
        <position position="75"/>
    </location>
    <ligand>
        <name>S-adenosyl-L-methionine</name>
        <dbReference type="ChEBI" id="CHEBI:59789"/>
    </ligand>
</feature>
<feature type="binding site" evidence="1">
    <location>
        <begin position="120"/>
        <end position="121"/>
    </location>
    <ligand>
        <name>S-adenosyl-L-methionine</name>
        <dbReference type="ChEBI" id="CHEBI:59789"/>
    </ligand>
</feature>
<feature type="binding site" evidence="1">
    <location>
        <position position="138"/>
    </location>
    <ligand>
        <name>S-adenosyl-L-methionine</name>
        <dbReference type="ChEBI" id="CHEBI:59789"/>
    </ligand>
</feature>
<organism>
    <name type="scientific">Mycobacterium ulcerans (strain Agy99)</name>
    <dbReference type="NCBI Taxonomy" id="362242"/>
    <lineage>
        <taxon>Bacteria</taxon>
        <taxon>Bacillati</taxon>
        <taxon>Actinomycetota</taxon>
        <taxon>Actinomycetes</taxon>
        <taxon>Mycobacteriales</taxon>
        <taxon>Mycobacteriaceae</taxon>
        <taxon>Mycobacterium</taxon>
        <taxon>Mycobacterium ulcerans group</taxon>
    </lineage>
</organism>
<dbReference type="EC" id="2.1.1.-" evidence="1"/>
<dbReference type="EMBL" id="CP000325">
    <property type="protein sequence ID" value="ABL06935.1"/>
    <property type="molecule type" value="Genomic_DNA"/>
</dbReference>
<dbReference type="SMR" id="A0PX66"/>
<dbReference type="KEGG" id="mul:MUL_5072"/>
<dbReference type="eggNOG" id="COG0357">
    <property type="taxonomic scope" value="Bacteria"/>
</dbReference>
<dbReference type="HOGENOM" id="CLU_065341_5_1_11"/>
<dbReference type="Proteomes" id="UP000000765">
    <property type="component" value="Chromosome"/>
</dbReference>
<dbReference type="GO" id="GO:0005829">
    <property type="term" value="C:cytosol"/>
    <property type="evidence" value="ECO:0007669"/>
    <property type="project" value="TreeGrafter"/>
</dbReference>
<dbReference type="GO" id="GO:0070043">
    <property type="term" value="F:rRNA (guanine-N7-)-methyltransferase activity"/>
    <property type="evidence" value="ECO:0007669"/>
    <property type="project" value="UniProtKB-UniRule"/>
</dbReference>
<dbReference type="Gene3D" id="3.40.50.150">
    <property type="entry name" value="Vaccinia Virus protein VP39"/>
    <property type="match status" value="1"/>
</dbReference>
<dbReference type="HAMAP" id="MF_00074">
    <property type="entry name" value="16SrRNA_methyltr_G"/>
    <property type="match status" value="1"/>
</dbReference>
<dbReference type="InterPro" id="IPR003682">
    <property type="entry name" value="rRNA_ssu_MeTfrase_G"/>
</dbReference>
<dbReference type="InterPro" id="IPR029063">
    <property type="entry name" value="SAM-dependent_MTases_sf"/>
</dbReference>
<dbReference type="NCBIfam" id="TIGR00138">
    <property type="entry name" value="rsmG_gidB"/>
    <property type="match status" value="1"/>
</dbReference>
<dbReference type="PANTHER" id="PTHR31760">
    <property type="entry name" value="S-ADENOSYL-L-METHIONINE-DEPENDENT METHYLTRANSFERASES SUPERFAMILY PROTEIN"/>
    <property type="match status" value="1"/>
</dbReference>
<dbReference type="PANTHER" id="PTHR31760:SF0">
    <property type="entry name" value="S-ADENOSYL-L-METHIONINE-DEPENDENT METHYLTRANSFERASES SUPERFAMILY PROTEIN"/>
    <property type="match status" value="1"/>
</dbReference>
<dbReference type="Pfam" id="PF02527">
    <property type="entry name" value="GidB"/>
    <property type="match status" value="1"/>
</dbReference>
<dbReference type="PIRSF" id="PIRSF003078">
    <property type="entry name" value="GidB"/>
    <property type="match status" value="1"/>
</dbReference>
<dbReference type="SUPFAM" id="SSF53335">
    <property type="entry name" value="S-adenosyl-L-methionine-dependent methyltransferases"/>
    <property type="match status" value="1"/>
</dbReference>
<protein>
    <recommendedName>
        <fullName evidence="1">Ribosomal RNA small subunit methyltransferase G</fullName>
        <ecNumber evidence="1">2.1.1.-</ecNumber>
    </recommendedName>
    <alternativeName>
        <fullName evidence="1">16S rRNA 7-methylguanosine methyltransferase</fullName>
        <shortName evidence="1">16S rRNA m7G methyltransferase</shortName>
    </alternativeName>
</protein>
<gene>
    <name evidence="1" type="primary">rsmG</name>
    <name type="ordered locus">MUL_5072</name>
</gene>
<keyword id="KW-0963">Cytoplasm</keyword>
<keyword id="KW-0489">Methyltransferase</keyword>
<keyword id="KW-0698">rRNA processing</keyword>
<keyword id="KW-0949">S-adenosyl-L-methionine</keyword>
<keyword id="KW-0808">Transferase</keyword>
<sequence>MTQPLDDAASAIFGPRLELAQCYADWLGTAGVERGLLGPREVDRLWERHVLNSAVIGELLDHGERVVDIGSGAGLPALPLAIARHDLQVVLLEPMLRRVEFLQEVVTDLGLAVEVVRGRAEERSVRERLGGSDAAVSRAVAALDKLAKWSMPLLKREGRMLAIKRGASSR</sequence>
<reference key="1">
    <citation type="journal article" date="2007" name="Genome Res.">
        <title>Reductive evolution and niche adaptation inferred from the genome of Mycobacterium ulcerans, the causative agent of Buruli ulcer.</title>
        <authorList>
            <person name="Stinear T.P."/>
            <person name="Seemann T."/>
            <person name="Pidot S."/>
            <person name="Frigui W."/>
            <person name="Reysset G."/>
            <person name="Garnier T."/>
            <person name="Meurice G."/>
            <person name="Simon D."/>
            <person name="Bouchier C."/>
            <person name="Ma L."/>
            <person name="Tichit M."/>
            <person name="Porter J.L."/>
            <person name="Ryan J."/>
            <person name="Johnson P.D.R."/>
            <person name="Davies J.K."/>
            <person name="Jenkin G.A."/>
            <person name="Small P.L.C."/>
            <person name="Jones L.M."/>
            <person name="Tekaia F."/>
            <person name="Laval F."/>
            <person name="Daffe M."/>
            <person name="Parkhill J."/>
            <person name="Cole S.T."/>
        </authorList>
    </citation>
    <scope>NUCLEOTIDE SEQUENCE [LARGE SCALE GENOMIC DNA]</scope>
    <source>
        <strain>Agy99</strain>
    </source>
</reference>
<proteinExistence type="inferred from homology"/>
<comment type="function">
    <text evidence="1">Specifically methylates the N7 position of guanine in position 518 of 16S rRNA.</text>
</comment>
<comment type="subcellular location">
    <subcellularLocation>
        <location evidence="1">Cytoplasm</location>
    </subcellularLocation>
</comment>
<comment type="similarity">
    <text evidence="1">Belongs to the methyltransferase superfamily. RNA methyltransferase RsmG family.</text>
</comment>
<name>RSMG_MYCUA</name>
<accession>A0PX66</accession>